<proteinExistence type="inferred from homology"/>
<name>RL29_STRMK</name>
<protein>
    <recommendedName>
        <fullName evidence="1">Large ribosomal subunit protein uL29</fullName>
    </recommendedName>
    <alternativeName>
        <fullName evidence="2">50S ribosomal protein L29</fullName>
    </alternativeName>
</protein>
<dbReference type="EMBL" id="AM743169">
    <property type="protein sequence ID" value="CAQ44483.1"/>
    <property type="molecule type" value="Genomic_DNA"/>
</dbReference>
<dbReference type="RefSeq" id="WP_004154487.1">
    <property type="nucleotide sequence ID" value="NC_010943.1"/>
</dbReference>
<dbReference type="SMR" id="B2FQ53"/>
<dbReference type="EnsemblBacteria" id="CAQ44483">
    <property type="protein sequence ID" value="CAQ44483"/>
    <property type="gene ID" value="Smlt0914"/>
</dbReference>
<dbReference type="GeneID" id="97259942"/>
<dbReference type="KEGG" id="sml:Smlt0914"/>
<dbReference type="eggNOG" id="COG0255">
    <property type="taxonomic scope" value="Bacteria"/>
</dbReference>
<dbReference type="HOGENOM" id="CLU_158491_1_2_6"/>
<dbReference type="Proteomes" id="UP000008840">
    <property type="component" value="Chromosome"/>
</dbReference>
<dbReference type="GO" id="GO:0022625">
    <property type="term" value="C:cytosolic large ribosomal subunit"/>
    <property type="evidence" value="ECO:0007669"/>
    <property type="project" value="TreeGrafter"/>
</dbReference>
<dbReference type="GO" id="GO:0003735">
    <property type="term" value="F:structural constituent of ribosome"/>
    <property type="evidence" value="ECO:0007669"/>
    <property type="project" value="InterPro"/>
</dbReference>
<dbReference type="GO" id="GO:0006412">
    <property type="term" value="P:translation"/>
    <property type="evidence" value="ECO:0007669"/>
    <property type="project" value="UniProtKB-UniRule"/>
</dbReference>
<dbReference type="CDD" id="cd00427">
    <property type="entry name" value="Ribosomal_L29_HIP"/>
    <property type="match status" value="1"/>
</dbReference>
<dbReference type="FunFam" id="1.10.287.310:FF:000001">
    <property type="entry name" value="50S ribosomal protein L29"/>
    <property type="match status" value="1"/>
</dbReference>
<dbReference type="Gene3D" id="1.10.287.310">
    <property type="match status" value="1"/>
</dbReference>
<dbReference type="HAMAP" id="MF_00374">
    <property type="entry name" value="Ribosomal_uL29"/>
    <property type="match status" value="1"/>
</dbReference>
<dbReference type="InterPro" id="IPR050063">
    <property type="entry name" value="Ribosomal_protein_uL29"/>
</dbReference>
<dbReference type="InterPro" id="IPR001854">
    <property type="entry name" value="Ribosomal_uL29"/>
</dbReference>
<dbReference type="InterPro" id="IPR018254">
    <property type="entry name" value="Ribosomal_uL29_CS"/>
</dbReference>
<dbReference type="InterPro" id="IPR036049">
    <property type="entry name" value="Ribosomal_uL29_sf"/>
</dbReference>
<dbReference type="NCBIfam" id="TIGR00012">
    <property type="entry name" value="L29"/>
    <property type="match status" value="1"/>
</dbReference>
<dbReference type="PANTHER" id="PTHR10916">
    <property type="entry name" value="60S RIBOSOMAL PROTEIN L35/50S RIBOSOMAL PROTEIN L29"/>
    <property type="match status" value="1"/>
</dbReference>
<dbReference type="PANTHER" id="PTHR10916:SF0">
    <property type="entry name" value="LARGE RIBOSOMAL SUBUNIT PROTEIN UL29C"/>
    <property type="match status" value="1"/>
</dbReference>
<dbReference type="Pfam" id="PF00831">
    <property type="entry name" value="Ribosomal_L29"/>
    <property type="match status" value="1"/>
</dbReference>
<dbReference type="SUPFAM" id="SSF46561">
    <property type="entry name" value="Ribosomal protein L29 (L29p)"/>
    <property type="match status" value="1"/>
</dbReference>
<dbReference type="PROSITE" id="PS00579">
    <property type="entry name" value="RIBOSOMAL_L29"/>
    <property type="match status" value="1"/>
</dbReference>
<accession>B2FQ53</accession>
<gene>
    <name evidence="1" type="primary">rpmC</name>
    <name type="ordered locus">Smlt0914</name>
</gene>
<comment type="similarity">
    <text evidence="1">Belongs to the universal ribosomal protein uL29 family.</text>
</comment>
<evidence type="ECO:0000255" key="1">
    <source>
        <dbReference type="HAMAP-Rule" id="MF_00374"/>
    </source>
</evidence>
<evidence type="ECO:0000305" key="2"/>
<sequence>MDIKTLREKSADELKAHLIDLRKEQFSVRMQQVTGQLPKTHDIRRVRREIARVKTLLGSTK</sequence>
<reference key="1">
    <citation type="journal article" date="2008" name="Genome Biol.">
        <title>The complete genome, comparative and functional analysis of Stenotrophomonas maltophilia reveals an organism heavily shielded by drug resistance determinants.</title>
        <authorList>
            <person name="Crossman L.C."/>
            <person name="Gould V.C."/>
            <person name="Dow J.M."/>
            <person name="Vernikos G.S."/>
            <person name="Okazaki A."/>
            <person name="Sebaihia M."/>
            <person name="Saunders D."/>
            <person name="Arrowsmith C."/>
            <person name="Carver T."/>
            <person name="Peters N."/>
            <person name="Adlem E."/>
            <person name="Kerhornou A."/>
            <person name="Lord A."/>
            <person name="Murphy L."/>
            <person name="Seeger K."/>
            <person name="Squares R."/>
            <person name="Rutter S."/>
            <person name="Quail M.A."/>
            <person name="Rajandream M.A."/>
            <person name="Harris D."/>
            <person name="Churcher C."/>
            <person name="Bentley S.D."/>
            <person name="Parkhill J."/>
            <person name="Thomson N.R."/>
            <person name="Avison M.B."/>
        </authorList>
    </citation>
    <scope>NUCLEOTIDE SEQUENCE [LARGE SCALE GENOMIC DNA]</scope>
    <source>
        <strain>K279a</strain>
    </source>
</reference>
<feature type="chain" id="PRO_1000121822" description="Large ribosomal subunit protein uL29">
    <location>
        <begin position="1"/>
        <end position="61"/>
    </location>
</feature>
<keyword id="KW-1185">Reference proteome</keyword>
<keyword id="KW-0687">Ribonucleoprotein</keyword>
<keyword id="KW-0689">Ribosomal protein</keyword>
<organism>
    <name type="scientific">Stenotrophomonas maltophilia (strain K279a)</name>
    <dbReference type="NCBI Taxonomy" id="522373"/>
    <lineage>
        <taxon>Bacteria</taxon>
        <taxon>Pseudomonadati</taxon>
        <taxon>Pseudomonadota</taxon>
        <taxon>Gammaproteobacteria</taxon>
        <taxon>Lysobacterales</taxon>
        <taxon>Lysobacteraceae</taxon>
        <taxon>Stenotrophomonas</taxon>
        <taxon>Stenotrophomonas maltophilia group</taxon>
    </lineage>
</organism>